<organism>
    <name type="scientific">Staphylococcus aureus (strain JH9)</name>
    <dbReference type="NCBI Taxonomy" id="359786"/>
    <lineage>
        <taxon>Bacteria</taxon>
        <taxon>Bacillati</taxon>
        <taxon>Bacillota</taxon>
        <taxon>Bacilli</taxon>
        <taxon>Bacillales</taxon>
        <taxon>Staphylococcaceae</taxon>
        <taxon>Staphylococcus</taxon>
    </lineage>
</organism>
<evidence type="ECO:0000255" key="1">
    <source>
        <dbReference type="HAMAP-Rule" id="MF_00101"/>
    </source>
</evidence>
<proteinExistence type="inferred from homology"/>
<dbReference type="EC" id="2.7.8.7" evidence="1"/>
<dbReference type="EMBL" id="CP000703">
    <property type="protein sequence ID" value="ABQ49890.1"/>
    <property type="molecule type" value="Genomic_DNA"/>
</dbReference>
<dbReference type="RefSeq" id="WP_000581197.1">
    <property type="nucleotide sequence ID" value="NC_009487.1"/>
</dbReference>
<dbReference type="BMRB" id="A5IUL7"/>
<dbReference type="SMR" id="A5IUL7"/>
<dbReference type="KEGG" id="saj:SaurJH9_2108"/>
<dbReference type="HOGENOM" id="CLU_089696_1_2_9"/>
<dbReference type="GO" id="GO:0005737">
    <property type="term" value="C:cytoplasm"/>
    <property type="evidence" value="ECO:0007669"/>
    <property type="project" value="UniProtKB-SubCell"/>
</dbReference>
<dbReference type="GO" id="GO:0008897">
    <property type="term" value="F:holo-[acyl-carrier-protein] synthase activity"/>
    <property type="evidence" value="ECO:0007669"/>
    <property type="project" value="UniProtKB-UniRule"/>
</dbReference>
<dbReference type="GO" id="GO:0000287">
    <property type="term" value="F:magnesium ion binding"/>
    <property type="evidence" value="ECO:0007669"/>
    <property type="project" value="UniProtKB-UniRule"/>
</dbReference>
<dbReference type="GO" id="GO:0006633">
    <property type="term" value="P:fatty acid biosynthetic process"/>
    <property type="evidence" value="ECO:0007669"/>
    <property type="project" value="UniProtKB-UniRule"/>
</dbReference>
<dbReference type="Gene3D" id="3.90.470.20">
    <property type="entry name" value="4'-phosphopantetheinyl transferase domain"/>
    <property type="match status" value="1"/>
</dbReference>
<dbReference type="HAMAP" id="MF_00101">
    <property type="entry name" value="AcpS"/>
    <property type="match status" value="1"/>
</dbReference>
<dbReference type="InterPro" id="IPR008278">
    <property type="entry name" value="4-PPantetheinyl_Trfase_dom"/>
</dbReference>
<dbReference type="InterPro" id="IPR037143">
    <property type="entry name" value="4-PPantetheinyl_Trfase_dom_sf"/>
</dbReference>
<dbReference type="InterPro" id="IPR002582">
    <property type="entry name" value="ACPS"/>
</dbReference>
<dbReference type="InterPro" id="IPR004568">
    <property type="entry name" value="Ppantetheine-prot_Trfase_dom"/>
</dbReference>
<dbReference type="NCBIfam" id="TIGR00516">
    <property type="entry name" value="acpS"/>
    <property type="match status" value="1"/>
</dbReference>
<dbReference type="NCBIfam" id="TIGR00556">
    <property type="entry name" value="pantethn_trn"/>
    <property type="match status" value="1"/>
</dbReference>
<dbReference type="Pfam" id="PF01648">
    <property type="entry name" value="ACPS"/>
    <property type="match status" value="1"/>
</dbReference>
<dbReference type="SUPFAM" id="SSF56214">
    <property type="entry name" value="4'-phosphopantetheinyl transferase"/>
    <property type="match status" value="1"/>
</dbReference>
<keyword id="KW-0963">Cytoplasm</keyword>
<keyword id="KW-0275">Fatty acid biosynthesis</keyword>
<keyword id="KW-0276">Fatty acid metabolism</keyword>
<keyword id="KW-0444">Lipid biosynthesis</keyword>
<keyword id="KW-0443">Lipid metabolism</keyword>
<keyword id="KW-0460">Magnesium</keyword>
<keyword id="KW-0479">Metal-binding</keyword>
<keyword id="KW-0808">Transferase</keyword>
<reference key="1">
    <citation type="submission" date="2007-05" db="EMBL/GenBank/DDBJ databases">
        <title>Complete sequence of chromosome of Staphylococcus aureus subsp. aureus JH9.</title>
        <authorList>
            <consortium name="US DOE Joint Genome Institute"/>
            <person name="Copeland A."/>
            <person name="Lucas S."/>
            <person name="Lapidus A."/>
            <person name="Barry K."/>
            <person name="Detter J.C."/>
            <person name="Glavina del Rio T."/>
            <person name="Hammon N."/>
            <person name="Israni S."/>
            <person name="Pitluck S."/>
            <person name="Chain P."/>
            <person name="Malfatti S."/>
            <person name="Shin M."/>
            <person name="Vergez L."/>
            <person name="Schmutz J."/>
            <person name="Larimer F."/>
            <person name="Land M."/>
            <person name="Hauser L."/>
            <person name="Kyrpides N."/>
            <person name="Kim E."/>
            <person name="Tomasz A."/>
            <person name="Richardson P."/>
        </authorList>
    </citation>
    <scope>NUCLEOTIDE SEQUENCE [LARGE SCALE GENOMIC DNA]</scope>
    <source>
        <strain>JH9</strain>
    </source>
</reference>
<protein>
    <recommendedName>
        <fullName evidence="1">Holo-[acyl-carrier-protein] synthase</fullName>
        <shortName evidence="1">Holo-ACP synthase</shortName>
        <ecNumber evidence="1">2.7.8.7</ecNumber>
    </recommendedName>
    <alternativeName>
        <fullName evidence="1">4'-phosphopantetheinyl transferase AcpS</fullName>
    </alternativeName>
</protein>
<sequence>MIHGIGVDLIEIDRIKVLYSKQPKLVERILTKNEQHKFNNFTHEQRKIEFLAGRFATKEAFSKALGTGLGKHVAFNDIDCYNDELGKPKIDYEGFIVHVSISHTEHYAMSQVVLEKSAF</sequence>
<accession>A5IUL7</accession>
<gene>
    <name evidence="1" type="primary">acpS</name>
    <name type="ordered locus">SaurJH9_2108</name>
</gene>
<comment type="function">
    <text evidence="1">Transfers the 4'-phosphopantetheine moiety from coenzyme A to a Ser of acyl-carrier-protein.</text>
</comment>
<comment type="catalytic activity">
    <reaction evidence="1">
        <text>apo-[ACP] + CoA = holo-[ACP] + adenosine 3',5'-bisphosphate + H(+)</text>
        <dbReference type="Rhea" id="RHEA:12068"/>
        <dbReference type="Rhea" id="RHEA-COMP:9685"/>
        <dbReference type="Rhea" id="RHEA-COMP:9690"/>
        <dbReference type="ChEBI" id="CHEBI:15378"/>
        <dbReference type="ChEBI" id="CHEBI:29999"/>
        <dbReference type="ChEBI" id="CHEBI:57287"/>
        <dbReference type="ChEBI" id="CHEBI:58343"/>
        <dbReference type="ChEBI" id="CHEBI:64479"/>
        <dbReference type="EC" id="2.7.8.7"/>
    </reaction>
</comment>
<comment type="cofactor">
    <cofactor evidence="1">
        <name>Mg(2+)</name>
        <dbReference type="ChEBI" id="CHEBI:18420"/>
    </cofactor>
</comment>
<comment type="subcellular location">
    <subcellularLocation>
        <location evidence="1">Cytoplasm</location>
    </subcellularLocation>
</comment>
<comment type="similarity">
    <text evidence="1">Belongs to the P-Pant transferase superfamily. AcpS family.</text>
</comment>
<name>ACPS_STAA9</name>
<feature type="chain" id="PRO_1000075665" description="Holo-[acyl-carrier-protein] synthase">
    <location>
        <begin position="1"/>
        <end position="119"/>
    </location>
</feature>
<feature type="binding site" evidence="1">
    <location>
        <position position="8"/>
    </location>
    <ligand>
        <name>Mg(2+)</name>
        <dbReference type="ChEBI" id="CHEBI:18420"/>
    </ligand>
</feature>
<feature type="binding site" evidence="1">
    <location>
        <position position="59"/>
    </location>
    <ligand>
        <name>Mg(2+)</name>
        <dbReference type="ChEBI" id="CHEBI:18420"/>
    </ligand>
</feature>